<reference key="1">
    <citation type="journal article" date="2007" name="Science">
        <title>Legumes symbioses: absence of nod genes in photosynthetic bradyrhizobia.</title>
        <authorList>
            <person name="Giraud E."/>
            <person name="Moulin L."/>
            <person name="Vallenet D."/>
            <person name="Barbe V."/>
            <person name="Cytryn E."/>
            <person name="Avarre J.-C."/>
            <person name="Jaubert M."/>
            <person name="Simon D."/>
            <person name="Cartieaux F."/>
            <person name="Prin Y."/>
            <person name="Bena G."/>
            <person name="Hannibal L."/>
            <person name="Fardoux J."/>
            <person name="Kojadinovic M."/>
            <person name="Vuillet L."/>
            <person name="Lajus A."/>
            <person name="Cruveiller S."/>
            <person name="Rouy Z."/>
            <person name="Mangenot S."/>
            <person name="Segurens B."/>
            <person name="Dossat C."/>
            <person name="Franck W.L."/>
            <person name="Chang W.-S."/>
            <person name="Saunders E."/>
            <person name="Bruce D."/>
            <person name="Richardson P."/>
            <person name="Normand P."/>
            <person name="Dreyfus B."/>
            <person name="Pignol D."/>
            <person name="Stacey G."/>
            <person name="Emerich D."/>
            <person name="Vermeglio A."/>
            <person name="Medigue C."/>
            <person name="Sadowsky M."/>
        </authorList>
    </citation>
    <scope>NUCLEOTIDE SEQUENCE [LARGE SCALE GENOMIC DNA]</scope>
    <source>
        <strain>ORS 278</strain>
    </source>
</reference>
<accession>A4YVF6</accession>
<dbReference type="EC" id="4.2.1.59" evidence="1"/>
<dbReference type="EMBL" id="CU234118">
    <property type="protein sequence ID" value="CAL77882.1"/>
    <property type="molecule type" value="Genomic_DNA"/>
</dbReference>
<dbReference type="RefSeq" id="WP_006611100.1">
    <property type="nucleotide sequence ID" value="NC_009445.1"/>
</dbReference>
<dbReference type="SMR" id="A4YVF6"/>
<dbReference type="STRING" id="114615.BRADO4130"/>
<dbReference type="KEGG" id="bra:BRADO4130"/>
<dbReference type="eggNOG" id="COG0764">
    <property type="taxonomic scope" value="Bacteria"/>
</dbReference>
<dbReference type="HOGENOM" id="CLU_078912_1_0_5"/>
<dbReference type="OrthoDB" id="9772788at2"/>
<dbReference type="Proteomes" id="UP000001994">
    <property type="component" value="Chromosome"/>
</dbReference>
<dbReference type="GO" id="GO:0005737">
    <property type="term" value="C:cytoplasm"/>
    <property type="evidence" value="ECO:0007669"/>
    <property type="project" value="UniProtKB-SubCell"/>
</dbReference>
<dbReference type="GO" id="GO:0016020">
    <property type="term" value="C:membrane"/>
    <property type="evidence" value="ECO:0007669"/>
    <property type="project" value="GOC"/>
</dbReference>
<dbReference type="GO" id="GO:0019171">
    <property type="term" value="F:(3R)-hydroxyacyl-[acyl-carrier-protein] dehydratase activity"/>
    <property type="evidence" value="ECO:0007669"/>
    <property type="project" value="UniProtKB-EC"/>
</dbReference>
<dbReference type="GO" id="GO:0006633">
    <property type="term" value="P:fatty acid biosynthetic process"/>
    <property type="evidence" value="ECO:0007669"/>
    <property type="project" value="UniProtKB-UniRule"/>
</dbReference>
<dbReference type="GO" id="GO:0009245">
    <property type="term" value="P:lipid A biosynthetic process"/>
    <property type="evidence" value="ECO:0007669"/>
    <property type="project" value="UniProtKB-UniRule"/>
</dbReference>
<dbReference type="CDD" id="cd01288">
    <property type="entry name" value="FabZ"/>
    <property type="match status" value="1"/>
</dbReference>
<dbReference type="FunFam" id="3.10.129.10:FF:000001">
    <property type="entry name" value="3-hydroxyacyl-[acyl-carrier-protein] dehydratase FabZ"/>
    <property type="match status" value="1"/>
</dbReference>
<dbReference type="Gene3D" id="3.10.129.10">
    <property type="entry name" value="Hotdog Thioesterase"/>
    <property type="match status" value="1"/>
</dbReference>
<dbReference type="HAMAP" id="MF_00406">
    <property type="entry name" value="FabZ"/>
    <property type="match status" value="1"/>
</dbReference>
<dbReference type="InterPro" id="IPR013114">
    <property type="entry name" value="FabA_FabZ"/>
</dbReference>
<dbReference type="InterPro" id="IPR010084">
    <property type="entry name" value="FabZ"/>
</dbReference>
<dbReference type="InterPro" id="IPR029069">
    <property type="entry name" value="HotDog_dom_sf"/>
</dbReference>
<dbReference type="NCBIfam" id="TIGR01750">
    <property type="entry name" value="fabZ"/>
    <property type="match status" value="1"/>
</dbReference>
<dbReference type="NCBIfam" id="NF000582">
    <property type="entry name" value="PRK00006.1"/>
    <property type="match status" value="1"/>
</dbReference>
<dbReference type="PANTHER" id="PTHR30272">
    <property type="entry name" value="3-HYDROXYACYL-[ACYL-CARRIER-PROTEIN] DEHYDRATASE"/>
    <property type="match status" value="1"/>
</dbReference>
<dbReference type="PANTHER" id="PTHR30272:SF1">
    <property type="entry name" value="3-HYDROXYACYL-[ACYL-CARRIER-PROTEIN] DEHYDRATASE"/>
    <property type="match status" value="1"/>
</dbReference>
<dbReference type="Pfam" id="PF07977">
    <property type="entry name" value="FabA"/>
    <property type="match status" value="1"/>
</dbReference>
<dbReference type="SUPFAM" id="SSF54637">
    <property type="entry name" value="Thioesterase/thiol ester dehydrase-isomerase"/>
    <property type="match status" value="1"/>
</dbReference>
<name>FABZ_BRASO</name>
<feature type="chain" id="PRO_0000340760" description="3-hydroxyacyl-[acyl-carrier-protein] dehydratase FabZ">
    <location>
        <begin position="1"/>
        <end position="152"/>
    </location>
</feature>
<feature type="active site" evidence="1">
    <location>
        <position position="57"/>
    </location>
</feature>
<organism>
    <name type="scientific">Bradyrhizobium sp. (strain ORS 278)</name>
    <dbReference type="NCBI Taxonomy" id="114615"/>
    <lineage>
        <taxon>Bacteria</taxon>
        <taxon>Pseudomonadati</taxon>
        <taxon>Pseudomonadota</taxon>
        <taxon>Alphaproteobacteria</taxon>
        <taxon>Hyphomicrobiales</taxon>
        <taxon>Nitrobacteraceae</taxon>
        <taxon>Bradyrhizobium</taxon>
    </lineage>
</organism>
<comment type="function">
    <text evidence="1">Involved in unsaturated fatty acids biosynthesis. Catalyzes the dehydration of short chain beta-hydroxyacyl-ACPs and long chain saturated and unsaturated beta-hydroxyacyl-ACPs.</text>
</comment>
<comment type="catalytic activity">
    <reaction evidence="1">
        <text>a (3R)-hydroxyacyl-[ACP] = a (2E)-enoyl-[ACP] + H2O</text>
        <dbReference type="Rhea" id="RHEA:13097"/>
        <dbReference type="Rhea" id="RHEA-COMP:9925"/>
        <dbReference type="Rhea" id="RHEA-COMP:9945"/>
        <dbReference type="ChEBI" id="CHEBI:15377"/>
        <dbReference type="ChEBI" id="CHEBI:78784"/>
        <dbReference type="ChEBI" id="CHEBI:78827"/>
        <dbReference type="EC" id="4.2.1.59"/>
    </reaction>
</comment>
<comment type="subcellular location">
    <subcellularLocation>
        <location evidence="1">Cytoplasm</location>
    </subcellularLocation>
</comment>
<comment type="similarity">
    <text evidence="1">Belongs to the thioester dehydratase family. FabZ subfamily.</text>
</comment>
<sequence length="152" mass="17120">MEESPIKFADIDINEILKTLPHRNPFLLIDRVKNIRADYSGIGVKNVSFNEPCFQGHFPERPVYPGVLMIEGMAQTAGVIGIKSVEGTEKPRAVYFLTIDKCKFRKPVLPGQTIEYHMRSIGRRKTMWWFHGDAKVDGVVVAEADVGAMLTD</sequence>
<evidence type="ECO:0000255" key="1">
    <source>
        <dbReference type="HAMAP-Rule" id="MF_00406"/>
    </source>
</evidence>
<keyword id="KW-0963">Cytoplasm</keyword>
<keyword id="KW-0441">Lipid A biosynthesis</keyword>
<keyword id="KW-0444">Lipid biosynthesis</keyword>
<keyword id="KW-0443">Lipid metabolism</keyword>
<keyword id="KW-0456">Lyase</keyword>
<keyword id="KW-1185">Reference proteome</keyword>
<protein>
    <recommendedName>
        <fullName evidence="1">3-hydroxyacyl-[acyl-carrier-protein] dehydratase FabZ</fullName>
        <ecNumber evidence="1">4.2.1.59</ecNumber>
    </recommendedName>
    <alternativeName>
        <fullName evidence="1">(3R)-hydroxymyristoyl-[acyl-carrier-protein] dehydratase</fullName>
        <shortName evidence="1">(3R)-hydroxymyristoyl-ACP dehydrase</shortName>
    </alternativeName>
    <alternativeName>
        <fullName evidence="1">Beta-hydroxyacyl-ACP dehydratase</fullName>
    </alternativeName>
</protein>
<gene>
    <name evidence="1" type="primary">fabZ</name>
    <name type="ordered locus">BRADO4130</name>
</gene>
<proteinExistence type="inferred from homology"/>